<name>Y2908_DESPS</name>
<keyword id="KW-0963">Cytoplasm</keyword>
<keyword id="KW-0238">DNA-binding</keyword>
<keyword id="KW-1185">Reference proteome</keyword>
<keyword id="KW-0804">Transcription</keyword>
<keyword id="KW-0805">Transcription regulation</keyword>
<organism>
    <name type="scientific">Desulfotalea psychrophila (strain LSv54 / DSM 12343)</name>
    <dbReference type="NCBI Taxonomy" id="177439"/>
    <lineage>
        <taxon>Bacteria</taxon>
        <taxon>Pseudomonadati</taxon>
        <taxon>Thermodesulfobacteriota</taxon>
        <taxon>Desulfobulbia</taxon>
        <taxon>Desulfobulbales</taxon>
        <taxon>Desulfocapsaceae</taxon>
        <taxon>Desulfotalea</taxon>
    </lineage>
</organism>
<proteinExistence type="inferred from homology"/>
<protein>
    <recommendedName>
        <fullName evidence="1">Probable transcriptional regulatory protein DP2908</fullName>
    </recommendedName>
</protein>
<comment type="subcellular location">
    <subcellularLocation>
        <location evidence="1">Cytoplasm</location>
    </subcellularLocation>
</comment>
<comment type="similarity">
    <text evidence="1">Belongs to the TACO1 family.</text>
</comment>
<accession>Q6AJ43</accession>
<feature type="chain" id="PRO_0000175797" description="Probable transcriptional regulatory protein DP2908">
    <location>
        <begin position="1"/>
        <end position="250"/>
    </location>
</feature>
<evidence type="ECO:0000255" key="1">
    <source>
        <dbReference type="HAMAP-Rule" id="MF_00693"/>
    </source>
</evidence>
<gene>
    <name type="ordered locus">DP2908</name>
</gene>
<dbReference type="EMBL" id="CR522870">
    <property type="protein sequence ID" value="CAG37637.1"/>
    <property type="molecule type" value="Genomic_DNA"/>
</dbReference>
<dbReference type="RefSeq" id="WP_011190149.1">
    <property type="nucleotide sequence ID" value="NC_006138.1"/>
</dbReference>
<dbReference type="SMR" id="Q6AJ43"/>
<dbReference type="STRING" id="177439.DP2908"/>
<dbReference type="KEGG" id="dps:DP2908"/>
<dbReference type="eggNOG" id="COG0217">
    <property type="taxonomic scope" value="Bacteria"/>
</dbReference>
<dbReference type="HOGENOM" id="CLU_062974_2_2_7"/>
<dbReference type="OrthoDB" id="9781053at2"/>
<dbReference type="Proteomes" id="UP000000602">
    <property type="component" value="Chromosome"/>
</dbReference>
<dbReference type="GO" id="GO:0005829">
    <property type="term" value="C:cytosol"/>
    <property type="evidence" value="ECO:0007669"/>
    <property type="project" value="TreeGrafter"/>
</dbReference>
<dbReference type="GO" id="GO:0003677">
    <property type="term" value="F:DNA binding"/>
    <property type="evidence" value="ECO:0007669"/>
    <property type="project" value="UniProtKB-UniRule"/>
</dbReference>
<dbReference type="GO" id="GO:0006355">
    <property type="term" value="P:regulation of DNA-templated transcription"/>
    <property type="evidence" value="ECO:0007669"/>
    <property type="project" value="UniProtKB-UniRule"/>
</dbReference>
<dbReference type="FunFam" id="1.10.10.200:FF:000002">
    <property type="entry name" value="Probable transcriptional regulatory protein CLM62_37755"/>
    <property type="match status" value="1"/>
</dbReference>
<dbReference type="FunFam" id="3.30.70.980:FF:000002">
    <property type="entry name" value="Probable transcriptional regulatory protein YebC"/>
    <property type="match status" value="1"/>
</dbReference>
<dbReference type="Gene3D" id="1.10.10.200">
    <property type="match status" value="1"/>
</dbReference>
<dbReference type="Gene3D" id="3.30.70.980">
    <property type="match status" value="2"/>
</dbReference>
<dbReference type="HAMAP" id="MF_00693">
    <property type="entry name" value="Transcrip_reg_TACO1"/>
    <property type="match status" value="1"/>
</dbReference>
<dbReference type="InterPro" id="IPR017856">
    <property type="entry name" value="Integrase-like_N"/>
</dbReference>
<dbReference type="InterPro" id="IPR048300">
    <property type="entry name" value="TACO1_YebC-like_2nd/3rd_dom"/>
</dbReference>
<dbReference type="InterPro" id="IPR049083">
    <property type="entry name" value="TACO1_YebC_N"/>
</dbReference>
<dbReference type="InterPro" id="IPR002876">
    <property type="entry name" value="Transcrip_reg_TACO1-like"/>
</dbReference>
<dbReference type="InterPro" id="IPR026564">
    <property type="entry name" value="Transcrip_reg_TACO1-like_dom3"/>
</dbReference>
<dbReference type="InterPro" id="IPR029072">
    <property type="entry name" value="YebC-like"/>
</dbReference>
<dbReference type="NCBIfam" id="NF001030">
    <property type="entry name" value="PRK00110.1"/>
    <property type="match status" value="1"/>
</dbReference>
<dbReference type="NCBIfam" id="NF009044">
    <property type="entry name" value="PRK12378.1"/>
    <property type="match status" value="1"/>
</dbReference>
<dbReference type="NCBIfam" id="TIGR01033">
    <property type="entry name" value="YebC/PmpR family DNA-binding transcriptional regulator"/>
    <property type="match status" value="1"/>
</dbReference>
<dbReference type="PANTHER" id="PTHR12532:SF6">
    <property type="entry name" value="TRANSCRIPTIONAL REGULATORY PROTEIN YEBC-RELATED"/>
    <property type="match status" value="1"/>
</dbReference>
<dbReference type="PANTHER" id="PTHR12532">
    <property type="entry name" value="TRANSLATIONAL ACTIVATOR OF CYTOCHROME C OXIDASE 1"/>
    <property type="match status" value="1"/>
</dbReference>
<dbReference type="Pfam" id="PF20772">
    <property type="entry name" value="TACO1_YebC_N"/>
    <property type="match status" value="1"/>
</dbReference>
<dbReference type="Pfam" id="PF01709">
    <property type="entry name" value="Transcrip_reg"/>
    <property type="match status" value="1"/>
</dbReference>
<dbReference type="SUPFAM" id="SSF75625">
    <property type="entry name" value="YebC-like"/>
    <property type="match status" value="1"/>
</dbReference>
<sequence length="250" mass="27339">MSGHSKWSTIKRKKGANDAKRGKIFTRLIKEITVAARGGGGDPEGNPRLRSAILVAKSENMPKDNITRAIKKGTGEIAGEVYDEILYEGYGPGGVAVLVECMTDNRNRTVADIRHYFAKNNGNLGEAGCVSWMFEKKGLILVDKATITEDELMDQALEAGAEDVVEDETEFQVLTNPTELDAVRGAMEAAGIAFVDASISMLPKNVVDVTDEKVGKNLLRLLESLEDHDDVQNVHSNFDIDEELMEQLAE</sequence>
<reference key="1">
    <citation type="journal article" date="2004" name="Environ. Microbiol.">
        <title>The genome of Desulfotalea psychrophila, a sulfate-reducing bacterium from permanently cold Arctic sediments.</title>
        <authorList>
            <person name="Rabus R."/>
            <person name="Ruepp A."/>
            <person name="Frickey T."/>
            <person name="Rattei T."/>
            <person name="Fartmann B."/>
            <person name="Stark M."/>
            <person name="Bauer M."/>
            <person name="Zibat A."/>
            <person name="Lombardot T."/>
            <person name="Becker I."/>
            <person name="Amann J."/>
            <person name="Gellner K."/>
            <person name="Teeling H."/>
            <person name="Leuschner W.D."/>
            <person name="Gloeckner F.-O."/>
            <person name="Lupas A.N."/>
            <person name="Amann R."/>
            <person name="Klenk H.-P."/>
        </authorList>
    </citation>
    <scope>NUCLEOTIDE SEQUENCE [LARGE SCALE GENOMIC DNA]</scope>
    <source>
        <strain>DSM 12343 / LSv54</strain>
    </source>
</reference>